<proteinExistence type="inferred from homology"/>
<protein>
    <recommendedName>
        <fullName evidence="1">Acetaldehyde dehydrogenase 1</fullName>
        <ecNumber evidence="1">1.2.1.10</ecNumber>
    </recommendedName>
    <alternativeName>
        <fullName evidence="1">Acetaldehyde dehydrogenase [acetylating] 1</fullName>
    </alternativeName>
</protein>
<feature type="chain" id="PRO_0000387617" description="Acetaldehyde dehydrogenase 1">
    <location>
        <begin position="1"/>
        <end position="304"/>
    </location>
</feature>
<feature type="active site" description="Acyl-thioester intermediate" evidence="1">
    <location>
        <position position="130"/>
    </location>
</feature>
<feature type="binding site" evidence="1">
    <location>
        <begin position="11"/>
        <end position="14"/>
    </location>
    <ligand>
        <name>NAD(+)</name>
        <dbReference type="ChEBI" id="CHEBI:57540"/>
    </ligand>
</feature>
<feature type="binding site" evidence="1">
    <location>
        <begin position="161"/>
        <end position="169"/>
    </location>
    <ligand>
        <name>NAD(+)</name>
        <dbReference type="ChEBI" id="CHEBI:57540"/>
    </ligand>
</feature>
<feature type="binding site" evidence="1">
    <location>
        <position position="272"/>
    </location>
    <ligand>
        <name>NAD(+)</name>
        <dbReference type="ChEBI" id="CHEBI:57540"/>
    </ligand>
</feature>
<evidence type="ECO:0000255" key="1">
    <source>
        <dbReference type="HAMAP-Rule" id="MF_01657"/>
    </source>
</evidence>
<dbReference type="EC" id="1.2.1.10" evidence="1"/>
<dbReference type="EMBL" id="AM406670">
    <property type="protein sequence ID" value="CAL94473.1"/>
    <property type="molecule type" value="Genomic_DNA"/>
</dbReference>
<dbReference type="RefSeq" id="WP_011765589.1">
    <property type="nucleotide sequence ID" value="NC_008702.1"/>
</dbReference>
<dbReference type="SMR" id="A1K6L8"/>
<dbReference type="STRING" id="62928.azo1856"/>
<dbReference type="KEGG" id="azo:azo1856"/>
<dbReference type="eggNOG" id="COG4569">
    <property type="taxonomic scope" value="Bacteria"/>
</dbReference>
<dbReference type="HOGENOM" id="CLU_062208_0_0_4"/>
<dbReference type="Proteomes" id="UP000002588">
    <property type="component" value="Chromosome"/>
</dbReference>
<dbReference type="GO" id="GO:0008774">
    <property type="term" value="F:acetaldehyde dehydrogenase (acetylating) activity"/>
    <property type="evidence" value="ECO:0007669"/>
    <property type="project" value="UniProtKB-UniRule"/>
</dbReference>
<dbReference type="GO" id="GO:0051287">
    <property type="term" value="F:NAD binding"/>
    <property type="evidence" value="ECO:0007669"/>
    <property type="project" value="UniProtKB-UniRule"/>
</dbReference>
<dbReference type="GO" id="GO:0009056">
    <property type="term" value="P:catabolic process"/>
    <property type="evidence" value="ECO:0007669"/>
    <property type="project" value="UniProtKB-KW"/>
</dbReference>
<dbReference type="CDD" id="cd23933">
    <property type="entry name" value="ALDH_C"/>
    <property type="match status" value="1"/>
</dbReference>
<dbReference type="Gene3D" id="3.30.360.10">
    <property type="entry name" value="Dihydrodipicolinate Reductase, domain 2"/>
    <property type="match status" value="1"/>
</dbReference>
<dbReference type="Gene3D" id="3.40.50.720">
    <property type="entry name" value="NAD(P)-binding Rossmann-like Domain"/>
    <property type="match status" value="1"/>
</dbReference>
<dbReference type="HAMAP" id="MF_01657">
    <property type="entry name" value="Ac_ald_DH_ac"/>
    <property type="match status" value="1"/>
</dbReference>
<dbReference type="InterPro" id="IPR003361">
    <property type="entry name" value="Acetaldehyde_dehydrogenase"/>
</dbReference>
<dbReference type="InterPro" id="IPR015426">
    <property type="entry name" value="Acetylaldehyde_DH_C"/>
</dbReference>
<dbReference type="InterPro" id="IPR036291">
    <property type="entry name" value="NAD(P)-bd_dom_sf"/>
</dbReference>
<dbReference type="InterPro" id="IPR000534">
    <property type="entry name" value="Semialdehyde_DH_NAD-bd"/>
</dbReference>
<dbReference type="NCBIfam" id="TIGR03215">
    <property type="entry name" value="ac_ald_DH_ac"/>
    <property type="match status" value="1"/>
</dbReference>
<dbReference type="NCBIfam" id="NF006157">
    <property type="entry name" value="PRK08300.1"/>
    <property type="match status" value="1"/>
</dbReference>
<dbReference type="Pfam" id="PF09290">
    <property type="entry name" value="AcetDehyd-dimer"/>
    <property type="match status" value="1"/>
</dbReference>
<dbReference type="PIRSF" id="PIRSF015689">
    <property type="entry name" value="Actaldh_dh_actl"/>
    <property type="match status" value="1"/>
</dbReference>
<dbReference type="SMART" id="SM00859">
    <property type="entry name" value="Semialdhyde_dh"/>
    <property type="match status" value="1"/>
</dbReference>
<dbReference type="SUPFAM" id="SSF55347">
    <property type="entry name" value="Glyceraldehyde-3-phosphate dehydrogenase-like, C-terminal domain"/>
    <property type="match status" value="1"/>
</dbReference>
<dbReference type="SUPFAM" id="SSF51735">
    <property type="entry name" value="NAD(P)-binding Rossmann-fold domains"/>
    <property type="match status" value="1"/>
</dbReference>
<keyword id="KW-0058">Aromatic hydrocarbons catabolism</keyword>
<keyword id="KW-0520">NAD</keyword>
<keyword id="KW-0560">Oxidoreductase</keyword>
<keyword id="KW-1185">Reference proteome</keyword>
<reference key="1">
    <citation type="journal article" date="2006" name="Nat. Biotechnol.">
        <title>Complete genome of the mutualistic, N2-fixing grass endophyte Azoarcus sp. strain BH72.</title>
        <authorList>
            <person name="Krause A."/>
            <person name="Ramakumar A."/>
            <person name="Bartels D."/>
            <person name="Battistoni F."/>
            <person name="Bekel T."/>
            <person name="Boch J."/>
            <person name="Boehm M."/>
            <person name="Friedrich F."/>
            <person name="Hurek T."/>
            <person name="Krause L."/>
            <person name="Linke B."/>
            <person name="McHardy A.C."/>
            <person name="Sarkar A."/>
            <person name="Schneiker S."/>
            <person name="Syed A.A."/>
            <person name="Thauer R."/>
            <person name="Vorhoelter F.-J."/>
            <person name="Weidner S."/>
            <person name="Puehler A."/>
            <person name="Reinhold-Hurek B."/>
            <person name="Kaiser O."/>
            <person name="Goesmann A."/>
        </authorList>
    </citation>
    <scope>NUCLEOTIDE SEQUENCE [LARGE SCALE GENOMIC DNA]</scope>
    <source>
        <strain>BH72</strain>
    </source>
</reference>
<accession>A1K6L8</accession>
<comment type="catalytic activity">
    <reaction evidence="1">
        <text>acetaldehyde + NAD(+) + CoA = acetyl-CoA + NADH + H(+)</text>
        <dbReference type="Rhea" id="RHEA:23288"/>
        <dbReference type="ChEBI" id="CHEBI:15343"/>
        <dbReference type="ChEBI" id="CHEBI:15378"/>
        <dbReference type="ChEBI" id="CHEBI:57287"/>
        <dbReference type="ChEBI" id="CHEBI:57288"/>
        <dbReference type="ChEBI" id="CHEBI:57540"/>
        <dbReference type="ChEBI" id="CHEBI:57945"/>
        <dbReference type="EC" id="1.2.1.10"/>
    </reaction>
</comment>
<comment type="similarity">
    <text evidence="1">Belongs to the acetaldehyde dehydrogenase family.</text>
</comment>
<name>ACDH1_AZOSB</name>
<organism>
    <name type="scientific">Azoarcus sp. (strain BH72)</name>
    <dbReference type="NCBI Taxonomy" id="418699"/>
    <lineage>
        <taxon>Bacteria</taxon>
        <taxon>Pseudomonadati</taxon>
        <taxon>Pseudomonadota</taxon>
        <taxon>Betaproteobacteria</taxon>
        <taxon>Rhodocyclales</taxon>
        <taxon>Zoogloeaceae</taxon>
        <taxon>Azoarcus</taxon>
    </lineage>
</organism>
<sequence length="304" mass="32387">MKKIKCALIGSGNIGTDLIYKIKRSPVLEPVWMVGIDPASEGLARARELGLKTTADGVDGLLPHVLEDGIQIAFDATSAYVHAENSRKLNELGVMMIDLTPAAIGPLCVPPVNLRQHADRVEMNVNMISCAGQATIPIVNAVSRVQGVEYAEIVASLASKSVGPGTRANLDEFTYTTSSAIEKVGGAKKGKALAIINPAEPPLIMRNTIYCLTESAPDQARITESILQMIGEVQKYVPGYRLVNGPSYDGNKVSVFMEVAGLGDYLPKYAGNLDIMTAAATRTAEMFAEEILAGKIKLKTAEVA</sequence>
<gene>
    <name type="primary">lapF</name>
    <name type="ordered locus">azo1856</name>
</gene>